<sequence length="427" mass="48679">MSLNYEQNAADEQFARAHKAVSLSDDEESEGQAETTSAPNQEPHVSKSPREYYDEPGGKGNGSGADDQDEPETEAASGAANTHVVAHHYNELKEAGRKDRQKSKIFFMRNFNNWIKSQLINEYMSQIKQNKRMGDALRVLDMCCGKGGDLLKWEKAAISHLICTDIAEVSVEQCQRRYQDILQRSEKSKFANKFTAEFFACDSTLVRLRERYKDPSLQLNLVSCQFAFHYCFESMAQADCMMRNAAECLKPGGFFIATMPDAYEIIRRLRAAGPDARRFGNDVYSIEFDCETDPLPLFGAKYQFHLEGVVDCPEFLVHFPTLVKLGRKYGLQLLKRSTFADYYKENLHHGRHLLQRMSGLESVQPQRCENDEEFAHVSNFQGAQRSRSVGTLSKSEWEAATLYLVCAFKKCKNTWDTNGKPLFEFDD</sequence>
<dbReference type="EC" id="2.1.1.56" evidence="2"/>
<dbReference type="EMBL" id="AE014134">
    <property type="protein sequence ID" value="AAF53430.2"/>
    <property type="molecule type" value="Genomic_DNA"/>
</dbReference>
<dbReference type="EMBL" id="AY071407">
    <property type="protein sequence ID" value="AAL49029.1"/>
    <property type="molecule type" value="mRNA"/>
</dbReference>
<dbReference type="RefSeq" id="NP_523568.2">
    <property type="nucleotide sequence ID" value="NM_078844.4"/>
</dbReference>
<dbReference type="SMR" id="Q9VJQ4"/>
<dbReference type="BioGRID" id="60896">
    <property type="interactions" value="3"/>
</dbReference>
<dbReference type="FunCoup" id="Q9VJQ4">
    <property type="interactions" value="2227"/>
</dbReference>
<dbReference type="IntAct" id="Q9VJQ4">
    <property type="interactions" value="3"/>
</dbReference>
<dbReference type="STRING" id="7227.FBpp0080257"/>
<dbReference type="iPTMnet" id="Q9VJQ4"/>
<dbReference type="PaxDb" id="7227-FBpp0080257"/>
<dbReference type="DNASU" id="34877"/>
<dbReference type="EnsemblMetazoa" id="FBtr0080696">
    <property type="protein sequence ID" value="FBpp0080257"/>
    <property type="gene ID" value="FBgn0286027"/>
</dbReference>
<dbReference type="GeneID" id="34877"/>
<dbReference type="KEGG" id="dme:Dmel_CG3688"/>
<dbReference type="AGR" id="FB:FBgn0286027"/>
<dbReference type="CTD" id="8731"/>
<dbReference type="FlyBase" id="FBgn0286027">
    <property type="gene designation" value="Rnmt"/>
</dbReference>
<dbReference type="VEuPathDB" id="VectorBase:FBgn0286027"/>
<dbReference type="eggNOG" id="KOG1975">
    <property type="taxonomic scope" value="Eukaryota"/>
</dbReference>
<dbReference type="GeneTree" id="ENSGT00390000002368"/>
<dbReference type="HOGENOM" id="CLU_020346_0_0_1"/>
<dbReference type="InParanoid" id="Q9VJQ4"/>
<dbReference type="OMA" id="HYCFESM"/>
<dbReference type="OrthoDB" id="10248867at2759"/>
<dbReference type="PhylomeDB" id="Q9VJQ4"/>
<dbReference type="Reactome" id="R-DME-72086">
    <property type="pathway name" value="mRNA Capping"/>
</dbReference>
<dbReference type="Reactome" id="R-DME-77075">
    <property type="pathway name" value="RNA Pol II CTD phosphorylation and interaction with CE"/>
</dbReference>
<dbReference type="BioGRID-ORCS" id="34877">
    <property type="hits" value="0 hits in 1 CRISPR screen"/>
</dbReference>
<dbReference type="GenomeRNAi" id="34877"/>
<dbReference type="PRO" id="PR:Q9VJQ4"/>
<dbReference type="Proteomes" id="UP000000803">
    <property type="component" value="Chromosome 2L"/>
</dbReference>
<dbReference type="Bgee" id="FBgn0286027">
    <property type="expression patterns" value="Expressed in cleaving embryo and 56 other cell types or tissues"/>
</dbReference>
<dbReference type="GO" id="GO:0005634">
    <property type="term" value="C:nucleus"/>
    <property type="evidence" value="ECO:0000250"/>
    <property type="project" value="UniProtKB"/>
</dbReference>
<dbReference type="GO" id="GO:0004482">
    <property type="term" value="F:mRNA 5'-cap (guanine-N7-)-methyltransferase activity"/>
    <property type="evidence" value="ECO:0000250"/>
    <property type="project" value="UniProtKB"/>
</dbReference>
<dbReference type="GO" id="GO:0003723">
    <property type="term" value="F:RNA binding"/>
    <property type="evidence" value="ECO:0000250"/>
    <property type="project" value="UniProtKB"/>
</dbReference>
<dbReference type="GO" id="GO:0006370">
    <property type="term" value="P:7-methylguanosine mRNA capping"/>
    <property type="evidence" value="ECO:0000250"/>
    <property type="project" value="UniProtKB"/>
</dbReference>
<dbReference type="CDD" id="cd02440">
    <property type="entry name" value="AdoMet_MTases"/>
    <property type="match status" value="1"/>
</dbReference>
<dbReference type="FunFam" id="3.40.50.150:FF:000394">
    <property type="entry name" value="mRNA cap guanine-N7 methyltransferase"/>
    <property type="match status" value="1"/>
</dbReference>
<dbReference type="Gene3D" id="3.40.50.150">
    <property type="entry name" value="Vaccinia Virus protein VP39"/>
    <property type="match status" value="1"/>
</dbReference>
<dbReference type="InterPro" id="IPR004971">
    <property type="entry name" value="mRNA_G-N7_MeTrfase_dom"/>
</dbReference>
<dbReference type="InterPro" id="IPR016899">
    <property type="entry name" value="mRNA_G-N7_MeTrfase_euk"/>
</dbReference>
<dbReference type="InterPro" id="IPR039753">
    <property type="entry name" value="RG7MT1"/>
</dbReference>
<dbReference type="InterPro" id="IPR029063">
    <property type="entry name" value="SAM-dependent_MTases_sf"/>
</dbReference>
<dbReference type="PANTHER" id="PTHR12189:SF2">
    <property type="entry name" value="MRNA CAP GUANINE-N7 METHYLTRANSFERASE"/>
    <property type="match status" value="1"/>
</dbReference>
<dbReference type="PANTHER" id="PTHR12189">
    <property type="entry name" value="MRNA GUANINE-7- METHYLTRANSFERASE"/>
    <property type="match status" value="1"/>
</dbReference>
<dbReference type="Pfam" id="PF03291">
    <property type="entry name" value="mRNA_G-N7_MeTrfase"/>
    <property type="match status" value="1"/>
</dbReference>
<dbReference type="PIRSF" id="PIRSF028762">
    <property type="entry name" value="ABD1"/>
    <property type="match status" value="1"/>
</dbReference>
<dbReference type="SUPFAM" id="SSF53335">
    <property type="entry name" value="S-adenosyl-L-methionine-dependent methyltransferases"/>
    <property type="match status" value="1"/>
</dbReference>
<dbReference type="PROSITE" id="PS51562">
    <property type="entry name" value="RNA_CAP0_MT"/>
    <property type="match status" value="1"/>
</dbReference>
<keyword id="KW-0489">Methyltransferase</keyword>
<keyword id="KW-0506">mRNA capping</keyword>
<keyword id="KW-0507">mRNA processing</keyword>
<keyword id="KW-0539">Nucleus</keyword>
<keyword id="KW-0597">Phosphoprotein</keyword>
<keyword id="KW-1185">Reference proteome</keyword>
<keyword id="KW-0694">RNA-binding</keyword>
<keyword id="KW-0949">S-adenosyl-L-methionine</keyword>
<keyword id="KW-0808">Transferase</keyword>
<protein>
    <recommendedName>
        <fullName>mRNA cap guanine-N(7) methyltransferase</fullName>
        <ecNumber evidence="2">2.1.1.56</ecNumber>
    </recommendedName>
    <alternativeName>
        <fullName>mRNA (guanine-N(7))-methyltransferase</fullName>
    </alternativeName>
</protein>
<comment type="function">
    <text evidence="1">mRNA-capping methyltransferase that methylates the N7 position of the added guanosine to the 5'-cap structure of mRNAs. Binds RNA containing 5'-terminal GpppC (By similarity).</text>
</comment>
<comment type="catalytic activity">
    <reaction evidence="2 3">
        <text>a 5'-end (5'-triphosphoguanosine)-ribonucleoside in mRNA + S-adenosyl-L-methionine = a 5'-end (N(7)-methyl 5'-triphosphoguanosine)-ribonucleoside in mRNA + S-adenosyl-L-homocysteine</text>
        <dbReference type="Rhea" id="RHEA:67008"/>
        <dbReference type="Rhea" id="RHEA-COMP:17166"/>
        <dbReference type="Rhea" id="RHEA-COMP:17167"/>
        <dbReference type="ChEBI" id="CHEBI:57856"/>
        <dbReference type="ChEBI" id="CHEBI:59789"/>
        <dbReference type="ChEBI" id="CHEBI:156461"/>
        <dbReference type="ChEBI" id="CHEBI:167617"/>
        <dbReference type="EC" id="2.1.1.56"/>
    </reaction>
</comment>
<comment type="interaction">
    <interactant intactId="EBI-88322">
        <id>Q9VJQ4</id>
    </interactant>
    <interactant intactId="EBI-26848341">
        <id>Q9W033</id>
        <label>Dmel\CG13807</label>
    </interactant>
    <organismsDiffer>false</organismsDiffer>
    <experiments>3</experiments>
</comment>
<comment type="subcellular location">
    <subcellularLocation>
        <location evidence="1">Nucleus</location>
    </subcellularLocation>
</comment>
<comment type="similarity">
    <text evidence="3">Belongs to the class I-like SAM-binding methyltransferase superfamily. mRNA cap 0 methyltransferase family.</text>
</comment>
<gene>
    <name evidence="6" type="primary">Rnmt</name>
    <name evidence="6" type="synonym">br9</name>
    <name evidence="6" type="synonym">l(2)br9</name>
    <name evidence="6" type="ORF">CG3688</name>
</gene>
<name>MCES_DROME</name>
<proteinExistence type="evidence at protein level"/>
<accession>Q9VJQ4</accession>
<accession>Q9N6X4</accession>
<evidence type="ECO:0000250" key="1"/>
<evidence type="ECO:0000250" key="2">
    <source>
        <dbReference type="UniProtKB" id="O43148"/>
    </source>
</evidence>
<evidence type="ECO:0000255" key="3">
    <source>
        <dbReference type="PROSITE-ProRule" id="PRU00895"/>
    </source>
</evidence>
<evidence type="ECO:0000256" key="4">
    <source>
        <dbReference type="SAM" id="MobiDB-lite"/>
    </source>
</evidence>
<evidence type="ECO:0000269" key="5">
    <source>
    </source>
</evidence>
<evidence type="ECO:0000312" key="6">
    <source>
        <dbReference type="FlyBase" id="FBgn0286027"/>
    </source>
</evidence>
<feature type="chain" id="PRO_0000248330" description="mRNA cap guanine-N(7) methyltransferase">
    <location>
        <begin position="1"/>
        <end position="427"/>
    </location>
</feature>
<feature type="domain" description="mRNA cap 0 methyltransferase" evidence="3">
    <location>
        <begin position="103"/>
        <end position="411"/>
    </location>
</feature>
<feature type="region of interest" description="Disordered" evidence="4">
    <location>
        <begin position="1"/>
        <end position="79"/>
    </location>
</feature>
<feature type="compositionally biased region" description="Basic and acidic residues" evidence="4">
    <location>
        <begin position="44"/>
        <end position="57"/>
    </location>
</feature>
<feature type="binding site" evidence="3">
    <location>
        <begin position="112"/>
        <end position="113"/>
    </location>
    <ligand>
        <name>mRNA</name>
        <dbReference type="ChEBI" id="CHEBI:33699"/>
    </ligand>
    <ligandPart>
        <name>mRNA cap</name>
    </ligandPart>
</feature>
<feature type="binding site" evidence="3">
    <location>
        <position position="116"/>
    </location>
    <ligand>
        <name>S-adenosyl-L-methionine</name>
        <dbReference type="ChEBI" id="CHEBI:59789"/>
    </ligand>
</feature>
<feature type="binding site" evidence="3">
    <location>
        <position position="143"/>
    </location>
    <ligand>
        <name>S-adenosyl-L-methionine</name>
        <dbReference type="ChEBI" id="CHEBI:59789"/>
    </ligand>
</feature>
<feature type="binding site" evidence="3">
    <location>
        <position position="165"/>
    </location>
    <ligand>
        <name>S-adenosyl-L-methionine</name>
        <dbReference type="ChEBI" id="CHEBI:59789"/>
    </ligand>
</feature>
<feature type="binding site" evidence="2">
    <location>
        <position position="202"/>
    </location>
    <ligand>
        <name>S-adenosyl-L-methionine</name>
        <dbReference type="ChEBI" id="CHEBI:59789"/>
    </ligand>
</feature>
<feature type="binding site" evidence="2">
    <location>
        <position position="225"/>
    </location>
    <ligand>
        <name>S-adenosyl-L-methionine</name>
        <dbReference type="ChEBI" id="CHEBI:59789"/>
    </ligand>
</feature>
<feature type="binding site" evidence="2">
    <location>
        <position position="230"/>
    </location>
    <ligand>
        <name>S-adenosyl-L-methionine</name>
        <dbReference type="ChEBI" id="CHEBI:59789"/>
    </ligand>
</feature>
<feature type="site" description="mRNA cap binding" evidence="3">
    <location>
        <position position="146"/>
    </location>
</feature>
<feature type="site" description="mRNA cap binding" evidence="3">
    <location>
        <position position="152"/>
    </location>
</feature>
<feature type="site" description="mRNA cap binding" evidence="3">
    <location>
        <position position="177"/>
    </location>
</feature>
<feature type="site" description="mRNA cap binding" evidence="3">
    <location>
        <position position="229"/>
    </location>
</feature>
<feature type="site" description="mRNA cap binding" evidence="3">
    <location>
        <position position="314"/>
    </location>
</feature>
<feature type="site" description="mRNA cap binding" evidence="3">
    <location>
        <position position="403"/>
    </location>
</feature>
<feature type="modified residue" description="Phosphoserine" evidence="5">
    <location>
        <position position="22"/>
    </location>
</feature>
<feature type="modified residue" description="Phosphoserine" evidence="5">
    <location>
        <position position="24"/>
    </location>
</feature>
<feature type="modified residue" description="Phosphoserine" evidence="5">
    <location>
        <position position="29"/>
    </location>
</feature>
<feature type="modified residue" description="Phosphoserine" evidence="5">
    <location>
        <position position="46"/>
    </location>
</feature>
<feature type="modified residue" description="Phosphoserine" evidence="5">
    <location>
        <position position="48"/>
    </location>
</feature>
<organism>
    <name type="scientific">Drosophila melanogaster</name>
    <name type="common">Fruit fly</name>
    <dbReference type="NCBI Taxonomy" id="7227"/>
    <lineage>
        <taxon>Eukaryota</taxon>
        <taxon>Metazoa</taxon>
        <taxon>Ecdysozoa</taxon>
        <taxon>Arthropoda</taxon>
        <taxon>Hexapoda</taxon>
        <taxon>Insecta</taxon>
        <taxon>Pterygota</taxon>
        <taxon>Neoptera</taxon>
        <taxon>Endopterygota</taxon>
        <taxon>Diptera</taxon>
        <taxon>Brachycera</taxon>
        <taxon>Muscomorpha</taxon>
        <taxon>Ephydroidea</taxon>
        <taxon>Drosophilidae</taxon>
        <taxon>Drosophila</taxon>
        <taxon>Sophophora</taxon>
    </lineage>
</organism>
<reference key="1">
    <citation type="journal article" date="2000" name="Science">
        <title>The genome sequence of Drosophila melanogaster.</title>
        <authorList>
            <person name="Adams M.D."/>
            <person name="Celniker S.E."/>
            <person name="Holt R.A."/>
            <person name="Evans C.A."/>
            <person name="Gocayne J.D."/>
            <person name="Amanatides P.G."/>
            <person name="Scherer S.E."/>
            <person name="Li P.W."/>
            <person name="Hoskins R.A."/>
            <person name="Galle R.F."/>
            <person name="George R.A."/>
            <person name="Lewis S.E."/>
            <person name="Richards S."/>
            <person name="Ashburner M."/>
            <person name="Henderson S.N."/>
            <person name="Sutton G.G."/>
            <person name="Wortman J.R."/>
            <person name="Yandell M.D."/>
            <person name="Zhang Q."/>
            <person name="Chen L.X."/>
            <person name="Brandon R.C."/>
            <person name="Rogers Y.-H.C."/>
            <person name="Blazej R.G."/>
            <person name="Champe M."/>
            <person name="Pfeiffer B.D."/>
            <person name="Wan K.H."/>
            <person name="Doyle C."/>
            <person name="Baxter E.G."/>
            <person name="Helt G."/>
            <person name="Nelson C.R."/>
            <person name="Miklos G.L.G."/>
            <person name="Abril J.F."/>
            <person name="Agbayani A."/>
            <person name="An H.-J."/>
            <person name="Andrews-Pfannkoch C."/>
            <person name="Baldwin D."/>
            <person name="Ballew R.M."/>
            <person name="Basu A."/>
            <person name="Baxendale J."/>
            <person name="Bayraktaroglu L."/>
            <person name="Beasley E.M."/>
            <person name="Beeson K.Y."/>
            <person name="Benos P.V."/>
            <person name="Berman B.P."/>
            <person name="Bhandari D."/>
            <person name="Bolshakov S."/>
            <person name="Borkova D."/>
            <person name="Botchan M.R."/>
            <person name="Bouck J."/>
            <person name="Brokstein P."/>
            <person name="Brottier P."/>
            <person name="Burtis K.C."/>
            <person name="Busam D.A."/>
            <person name="Butler H."/>
            <person name="Cadieu E."/>
            <person name="Center A."/>
            <person name="Chandra I."/>
            <person name="Cherry J.M."/>
            <person name="Cawley S."/>
            <person name="Dahlke C."/>
            <person name="Davenport L.B."/>
            <person name="Davies P."/>
            <person name="de Pablos B."/>
            <person name="Delcher A."/>
            <person name="Deng Z."/>
            <person name="Mays A.D."/>
            <person name="Dew I."/>
            <person name="Dietz S.M."/>
            <person name="Dodson K."/>
            <person name="Doup L.E."/>
            <person name="Downes M."/>
            <person name="Dugan-Rocha S."/>
            <person name="Dunkov B.C."/>
            <person name="Dunn P."/>
            <person name="Durbin K.J."/>
            <person name="Evangelista C.C."/>
            <person name="Ferraz C."/>
            <person name="Ferriera S."/>
            <person name="Fleischmann W."/>
            <person name="Fosler C."/>
            <person name="Gabrielian A.E."/>
            <person name="Garg N.S."/>
            <person name="Gelbart W.M."/>
            <person name="Glasser K."/>
            <person name="Glodek A."/>
            <person name="Gong F."/>
            <person name="Gorrell J.H."/>
            <person name="Gu Z."/>
            <person name="Guan P."/>
            <person name="Harris M."/>
            <person name="Harris N.L."/>
            <person name="Harvey D.A."/>
            <person name="Heiman T.J."/>
            <person name="Hernandez J.R."/>
            <person name="Houck J."/>
            <person name="Hostin D."/>
            <person name="Houston K.A."/>
            <person name="Howland T.J."/>
            <person name="Wei M.-H."/>
            <person name="Ibegwam C."/>
            <person name="Jalali M."/>
            <person name="Kalush F."/>
            <person name="Karpen G.H."/>
            <person name="Ke Z."/>
            <person name="Kennison J.A."/>
            <person name="Ketchum K.A."/>
            <person name="Kimmel B.E."/>
            <person name="Kodira C.D."/>
            <person name="Kraft C.L."/>
            <person name="Kravitz S."/>
            <person name="Kulp D."/>
            <person name="Lai Z."/>
            <person name="Lasko P."/>
            <person name="Lei Y."/>
            <person name="Levitsky A.A."/>
            <person name="Li J.H."/>
            <person name="Li Z."/>
            <person name="Liang Y."/>
            <person name="Lin X."/>
            <person name="Liu X."/>
            <person name="Mattei B."/>
            <person name="McIntosh T.C."/>
            <person name="McLeod M.P."/>
            <person name="McPherson D."/>
            <person name="Merkulov G."/>
            <person name="Milshina N.V."/>
            <person name="Mobarry C."/>
            <person name="Morris J."/>
            <person name="Moshrefi A."/>
            <person name="Mount S.M."/>
            <person name="Moy M."/>
            <person name="Murphy B."/>
            <person name="Murphy L."/>
            <person name="Muzny D.M."/>
            <person name="Nelson D.L."/>
            <person name="Nelson D.R."/>
            <person name="Nelson K.A."/>
            <person name="Nixon K."/>
            <person name="Nusskern D.R."/>
            <person name="Pacleb J.M."/>
            <person name="Palazzolo M."/>
            <person name="Pittman G.S."/>
            <person name="Pan S."/>
            <person name="Pollard J."/>
            <person name="Puri V."/>
            <person name="Reese M.G."/>
            <person name="Reinert K."/>
            <person name="Remington K."/>
            <person name="Saunders R.D.C."/>
            <person name="Scheeler F."/>
            <person name="Shen H."/>
            <person name="Shue B.C."/>
            <person name="Siden-Kiamos I."/>
            <person name="Simpson M."/>
            <person name="Skupski M.P."/>
            <person name="Smith T.J."/>
            <person name="Spier E."/>
            <person name="Spradling A.C."/>
            <person name="Stapleton M."/>
            <person name="Strong R."/>
            <person name="Sun E."/>
            <person name="Svirskas R."/>
            <person name="Tector C."/>
            <person name="Turner R."/>
            <person name="Venter E."/>
            <person name="Wang A.H."/>
            <person name="Wang X."/>
            <person name="Wang Z.-Y."/>
            <person name="Wassarman D.A."/>
            <person name="Weinstock G.M."/>
            <person name="Weissenbach J."/>
            <person name="Williams S.M."/>
            <person name="Woodage T."/>
            <person name="Worley K.C."/>
            <person name="Wu D."/>
            <person name="Yang S."/>
            <person name="Yao Q.A."/>
            <person name="Ye J."/>
            <person name="Yeh R.-F."/>
            <person name="Zaveri J.S."/>
            <person name="Zhan M."/>
            <person name="Zhang G."/>
            <person name="Zhao Q."/>
            <person name="Zheng L."/>
            <person name="Zheng X.H."/>
            <person name="Zhong F.N."/>
            <person name="Zhong W."/>
            <person name="Zhou X."/>
            <person name="Zhu S.C."/>
            <person name="Zhu X."/>
            <person name="Smith H.O."/>
            <person name="Gibbs R.A."/>
            <person name="Myers E.W."/>
            <person name="Rubin G.M."/>
            <person name="Venter J.C."/>
        </authorList>
    </citation>
    <scope>NUCLEOTIDE SEQUENCE [LARGE SCALE GENOMIC DNA]</scope>
    <source>
        <strain>Berkeley</strain>
    </source>
</reference>
<reference key="2">
    <citation type="journal article" date="2002" name="Genome Biol.">
        <title>Annotation of the Drosophila melanogaster euchromatic genome: a systematic review.</title>
        <authorList>
            <person name="Misra S."/>
            <person name="Crosby M.A."/>
            <person name="Mungall C.J."/>
            <person name="Matthews B.B."/>
            <person name="Campbell K.S."/>
            <person name="Hradecky P."/>
            <person name="Huang Y."/>
            <person name="Kaminker J.S."/>
            <person name="Millburn G.H."/>
            <person name="Prochnik S.E."/>
            <person name="Smith C.D."/>
            <person name="Tupy J.L."/>
            <person name="Whitfield E.J."/>
            <person name="Bayraktaroglu L."/>
            <person name="Berman B.P."/>
            <person name="Bettencourt B.R."/>
            <person name="Celniker S.E."/>
            <person name="de Grey A.D.N.J."/>
            <person name="Drysdale R.A."/>
            <person name="Harris N.L."/>
            <person name="Richter J."/>
            <person name="Russo S."/>
            <person name="Schroeder A.J."/>
            <person name="Shu S.Q."/>
            <person name="Stapleton M."/>
            <person name="Yamada C."/>
            <person name="Ashburner M."/>
            <person name="Gelbart W.M."/>
            <person name="Rubin G.M."/>
            <person name="Lewis S.E."/>
        </authorList>
    </citation>
    <scope>GENOME REANNOTATION</scope>
    <source>
        <strain>Berkeley</strain>
    </source>
</reference>
<reference key="3">
    <citation type="journal article" date="2002" name="Genome Biol.">
        <title>A Drosophila full-length cDNA resource.</title>
        <authorList>
            <person name="Stapleton M."/>
            <person name="Carlson J.W."/>
            <person name="Brokstein P."/>
            <person name="Yu C."/>
            <person name="Champe M."/>
            <person name="George R.A."/>
            <person name="Guarin H."/>
            <person name="Kronmiller B."/>
            <person name="Pacleb J.M."/>
            <person name="Park S."/>
            <person name="Wan K.H."/>
            <person name="Rubin G.M."/>
            <person name="Celniker S.E."/>
        </authorList>
    </citation>
    <scope>NUCLEOTIDE SEQUENCE [LARGE SCALE MRNA]</scope>
    <source>
        <strain>Berkeley</strain>
        <tissue>Embryo</tissue>
    </source>
</reference>
<reference key="4">
    <citation type="journal article" date="2008" name="J. Proteome Res.">
        <title>Phosphoproteome analysis of Drosophila melanogaster embryos.</title>
        <authorList>
            <person name="Zhai B."/>
            <person name="Villen J."/>
            <person name="Beausoleil S.A."/>
            <person name="Mintseris J."/>
            <person name="Gygi S.P."/>
        </authorList>
    </citation>
    <scope>PHOSPHORYLATION [LARGE SCALE ANALYSIS] AT SER-22; SER-24; SER-29; SER-46 AND SER-48</scope>
    <scope>IDENTIFICATION BY MASS SPECTROMETRY</scope>
    <source>
        <tissue>Embryo</tissue>
    </source>
</reference>